<sequence>MSDKLWGGRFTAKAAEWVDEFGASIHFDQKMAAEDIEGSIAHAKMLGKQGIISPEESEKIVSGLKIINEELIAGKIEFDVKNEDIHMNIESLLTEKIGPVAGKLHTARSRNDQVATDFHLWVKHRLPHVLESLTELQEELLTLATTHAGTIMSGYTHLQHAQPITYGHYLLAYFEMFQRDYERFEFNQKHTDILPLGAAALAGTTFPIDREFVASELGFDSIYHNSLDAVSDRDFALEFLSNAAILMMHLSRMAEELILWSTYEFNYIELSDDFSTGSSIMPQKKNADFAELVRGKTGRSYGALMGLLTTMKSLPLAYNKDMQEDKEQVFDIMDTVLASVKVFTGMLSGLTVHKERMLATTQDDFSNATELADYLATKGVPFREAHAIVGQLVLTGIQSKTPLQKMSLSDLQAVAPQIEEDIYDKLQSETAVNRRTSLGGTAVENVKKEIVRNKKVLEAR</sequence>
<keyword id="KW-0028">Amino-acid biosynthesis</keyword>
<keyword id="KW-0055">Arginine biosynthesis</keyword>
<keyword id="KW-0963">Cytoplasm</keyword>
<keyword id="KW-0456">Lyase</keyword>
<keyword id="KW-1185">Reference proteome</keyword>
<protein>
    <recommendedName>
        <fullName evidence="1">Argininosuccinate lyase</fullName>
        <shortName evidence="1">ASAL</shortName>
        <ecNumber evidence="1">4.3.2.1</ecNumber>
    </recommendedName>
    <alternativeName>
        <fullName evidence="1">Arginosuccinase</fullName>
    </alternativeName>
</protein>
<comment type="catalytic activity">
    <reaction evidence="1">
        <text>2-(N(omega)-L-arginino)succinate = fumarate + L-arginine</text>
        <dbReference type="Rhea" id="RHEA:24020"/>
        <dbReference type="ChEBI" id="CHEBI:29806"/>
        <dbReference type="ChEBI" id="CHEBI:32682"/>
        <dbReference type="ChEBI" id="CHEBI:57472"/>
        <dbReference type="EC" id="4.3.2.1"/>
    </reaction>
</comment>
<comment type="pathway">
    <text evidence="1">Amino-acid biosynthesis; L-arginine biosynthesis; L-arginine from L-ornithine and carbamoyl phosphate: step 3/3.</text>
</comment>
<comment type="subcellular location">
    <subcellularLocation>
        <location evidence="1">Cytoplasm</location>
    </subcellularLocation>
</comment>
<comment type="similarity">
    <text evidence="1">Belongs to the lyase 1 family. Argininosuccinate lyase subfamily.</text>
</comment>
<proteinExistence type="inferred from homology"/>
<gene>
    <name evidence="1" type="primary">argH</name>
    <name type="ordered locus">LEUM_1458</name>
</gene>
<accession>Q03W71</accession>
<evidence type="ECO:0000255" key="1">
    <source>
        <dbReference type="HAMAP-Rule" id="MF_00006"/>
    </source>
</evidence>
<feature type="chain" id="PRO_1000057053" description="Argininosuccinate lyase">
    <location>
        <begin position="1"/>
        <end position="460"/>
    </location>
</feature>
<dbReference type="EC" id="4.3.2.1" evidence="1"/>
<dbReference type="EMBL" id="CP000414">
    <property type="protein sequence ID" value="ABJ62551.1"/>
    <property type="molecule type" value="Genomic_DNA"/>
</dbReference>
<dbReference type="RefSeq" id="WP_011680141.1">
    <property type="nucleotide sequence ID" value="NC_008531.1"/>
</dbReference>
<dbReference type="SMR" id="Q03W71"/>
<dbReference type="EnsemblBacteria" id="ABJ62551">
    <property type="protein sequence ID" value="ABJ62551"/>
    <property type="gene ID" value="LEUM_1458"/>
</dbReference>
<dbReference type="GeneID" id="29575996"/>
<dbReference type="KEGG" id="lme:LEUM_1458"/>
<dbReference type="eggNOG" id="COG0165">
    <property type="taxonomic scope" value="Bacteria"/>
</dbReference>
<dbReference type="HOGENOM" id="CLU_027272_2_3_9"/>
<dbReference type="UniPathway" id="UPA00068">
    <property type="reaction ID" value="UER00114"/>
</dbReference>
<dbReference type="Proteomes" id="UP000000362">
    <property type="component" value="Chromosome"/>
</dbReference>
<dbReference type="GO" id="GO:0005829">
    <property type="term" value="C:cytosol"/>
    <property type="evidence" value="ECO:0007669"/>
    <property type="project" value="TreeGrafter"/>
</dbReference>
<dbReference type="GO" id="GO:0004056">
    <property type="term" value="F:argininosuccinate lyase activity"/>
    <property type="evidence" value="ECO:0007669"/>
    <property type="project" value="UniProtKB-UniRule"/>
</dbReference>
<dbReference type="GO" id="GO:0042450">
    <property type="term" value="P:arginine biosynthetic process via ornithine"/>
    <property type="evidence" value="ECO:0007669"/>
    <property type="project" value="InterPro"/>
</dbReference>
<dbReference type="GO" id="GO:0006526">
    <property type="term" value="P:L-arginine biosynthetic process"/>
    <property type="evidence" value="ECO:0007669"/>
    <property type="project" value="UniProtKB-UniRule"/>
</dbReference>
<dbReference type="CDD" id="cd01359">
    <property type="entry name" value="Argininosuccinate_lyase"/>
    <property type="match status" value="1"/>
</dbReference>
<dbReference type="FunFam" id="1.10.275.10:FF:000002">
    <property type="entry name" value="Argininosuccinate lyase"/>
    <property type="match status" value="1"/>
</dbReference>
<dbReference type="FunFam" id="1.10.40.30:FF:000001">
    <property type="entry name" value="Argininosuccinate lyase"/>
    <property type="match status" value="1"/>
</dbReference>
<dbReference type="FunFam" id="1.20.200.10:FF:000002">
    <property type="entry name" value="Argininosuccinate lyase"/>
    <property type="match status" value="1"/>
</dbReference>
<dbReference type="Gene3D" id="1.10.40.30">
    <property type="entry name" value="Fumarase/aspartase (C-terminal domain)"/>
    <property type="match status" value="1"/>
</dbReference>
<dbReference type="Gene3D" id="1.20.200.10">
    <property type="entry name" value="Fumarase/aspartase (Central domain)"/>
    <property type="match status" value="1"/>
</dbReference>
<dbReference type="Gene3D" id="1.10.275.10">
    <property type="entry name" value="Fumarase/aspartase (N-terminal domain)"/>
    <property type="match status" value="1"/>
</dbReference>
<dbReference type="HAMAP" id="MF_00006">
    <property type="entry name" value="Arg_succ_lyase"/>
    <property type="match status" value="1"/>
</dbReference>
<dbReference type="InterPro" id="IPR029419">
    <property type="entry name" value="Arg_succ_lyase_C"/>
</dbReference>
<dbReference type="InterPro" id="IPR009049">
    <property type="entry name" value="Argininosuccinate_lyase"/>
</dbReference>
<dbReference type="InterPro" id="IPR024083">
    <property type="entry name" value="Fumarase/histidase_N"/>
</dbReference>
<dbReference type="InterPro" id="IPR020557">
    <property type="entry name" value="Fumarate_lyase_CS"/>
</dbReference>
<dbReference type="InterPro" id="IPR000362">
    <property type="entry name" value="Fumarate_lyase_fam"/>
</dbReference>
<dbReference type="InterPro" id="IPR022761">
    <property type="entry name" value="Fumarate_lyase_N"/>
</dbReference>
<dbReference type="InterPro" id="IPR008948">
    <property type="entry name" value="L-Aspartase-like"/>
</dbReference>
<dbReference type="NCBIfam" id="TIGR00838">
    <property type="entry name" value="argH"/>
    <property type="match status" value="1"/>
</dbReference>
<dbReference type="PANTHER" id="PTHR43814">
    <property type="entry name" value="ARGININOSUCCINATE LYASE"/>
    <property type="match status" value="1"/>
</dbReference>
<dbReference type="PANTHER" id="PTHR43814:SF1">
    <property type="entry name" value="ARGININOSUCCINATE LYASE"/>
    <property type="match status" value="1"/>
</dbReference>
<dbReference type="Pfam" id="PF14698">
    <property type="entry name" value="ASL_C2"/>
    <property type="match status" value="1"/>
</dbReference>
<dbReference type="Pfam" id="PF00206">
    <property type="entry name" value="Lyase_1"/>
    <property type="match status" value="1"/>
</dbReference>
<dbReference type="PRINTS" id="PR00145">
    <property type="entry name" value="ARGSUCLYASE"/>
</dbReference>
<dbReference type="PRINTS" id="PR00149">
    <property type="entry name" value="FUMRATELYASE"/>
</dbReference>
<dbReference type="SUPFAM" id="SSF48557">
    <property type="entry name" value="L-aspartase-like"/>
    <property type="match status" value="1"/>
</dbReference>
<dbReference type="PROSITE" id="PS00163">
    <property type="entry name" value="FUMARATE_LYASES"/>
    <property type="match status" value="1"/>
</dbReference>
<organism>
    <name type="scientific">Leuconostoc mesenteroides subsp. mesenteroides (strain ATCC 8293 / DSM 20343 / BCRC 11652 / CCM 1803 / JCM 6124 / NCDO 523 / NBRC 100496 / NCIMB 8023 / NCTC 12954 / NRRL B-1118 / 37Y)</name>
    <dbReference type="NCBI Taxonomy" id="203120"/>
    <lineage>
        <taxon>Bacteria</taxon>
        <taxon>Bacillati</taxon>
        <taxon>Bacillota</taxon>
        <taxon>Bacilli</taxon>
        <taxon>Lactobacillales</taxon>
        <taxon>Lactobacillaceae</taxon>
        <taxon>Leuconostoc</taxon>
    </lineage>
</organism>
<name>ARLY_LEUMM</name>
<reference key="1">
    <citation type="journal article" date="2006" name="Proc. Natl. Acad. Sci. U.S.A.">
        <title>Comparative genomics of the lactic acid bacteria.</title>
        <authorList>
            <person name="Makarova K.S."/>
            <person name="Slesarev A."/>
            <person name="Wolf Y.I."/>
            <person name="Sorokin A."/>
            <person name="Mirkin B."/>
            <person name="Koonin E.V."/>
            <person name="Pavlov A."/>
            <person name="Pavlova N."/>
            <person name="Karamychev V."/>
            <person name="Polouchine N."/>
            <person name="Shakhova V."/>
            <person name="Grigoriev I."/>
            <person name="Lou Y."/>
            <person name="Rohksar D."/>
            <person name="Lucas S."/>
            <person name="Huang K."/>
            <person name="Goodstein D.M."/>
            <person name="Hawkins T."/>
            <person name="Plengvidhya V."/>
            <person name="Welker D."/>
            <person name="Hughes J."/>
            <person name="Goh Y."/>
            <person name="Benson A."/>
            <person name="Baldwin K."/>
            <person name="Lee J.-H."/>
            <person name="Diaz-Muniz I."/>
            <person name="Dosti B."/>
            <person name="Smeianov V."/>
            <person name="Wechter W."/>
            <person name="Barabote R."/>
            <person name="Lorca G."/>
            <person name="Altermann E."/>
            <person name="Barrangou R."/>
            <person name="Ganesan B."/>
            <person name="Xie Y."/>
            <person name="Rawsthorne H."/>
            <person name="Tamir D."/>
            <person name="Parker C."/>
            <person name="Breidt F."/>
            <person name="Broadbent J.R."/>
            <person name="Hutkins R."/>
            <person name="O'Sullivan D."/>
            <person name="Steele J."/>
            <person name="Unlu G."/>
            <person name="Saier M.H. Jr."/>
            <person name="Klaenhammer T."/>
            <person name="Richardson P."/>
            <person name="Kozyavkin S."/>
            <person name="Weimer B.C."/>
            <person name="Mills D.A."/>
        </authorList>
    </citation>
    <scope>NUCLEOTIDE SEQUENCE [LARGE SCALE GENOMIC DNA]</scope>
    <source>
        <strain>ATCC 8293 / DSM 20343 / BCRC 11652 / CCM 1803 / JCM 6124 / NCDO 523 / NBRC 100496 / NCIMB 8023 / NCTC 12954 / NRRL B-1118 / 37Y</strain>
    </source>
</reference>